<organism>
    <name type="scientific">Streptomyces griseus subsp. griseus (strain JCM 4626 / CBS 651.72 / NBRC 13350 / KCC S-0626 / ISP 5235)</name>
    <dbReference type="NCBI Taxonomy" id="455632"/>
    <lineage>
        <taxon>Bacteria</taxon>
        <taxon>Bacillati</taxon>
        <taxon>Actinomycetota</taxon>
        <taxon>Actinomycetes</taxon>
        <taxon>Kitasatosporales</taxon>
        <taxon>Streptomycetaceae</taxon>
        <taxon>Streptomyces</taxon>
    </lineage>
</organism>
<keyword id="KW-0687">Ribonucleoprotein</keyword>
<keyword id="KW-0689">Ribosomal protein</keyword>
<feature type="chain" id="PRO_0000356752" description="Large ribosomal subunit protein bL33C">
    <location>
        <begin position="1"/>
        <end position="54"/>
    </location>
</feature>
<sequence>MARSETRPVVTLRSTAGTGRSYVTRKNRRNDPDRLELRKFDPAVGRHVLFREVR</sequence>
<protein>
    <recommendedName>
        <fullName evidence="1">Large ribosomal subunit protein bL33C</fullName>
    </recommendedName>
    <alternativeName>
        <fullName evidence="1">50S ribosomal protein L33 3</fullName>
    </alternativeName>
</protein>
<dbReference type="EMBL" id="AP009493">
    <property type="protein sequence ID" value="BAG23674.1"/>
    <property type="molecule type" value="Genomic_DNA"/>
</dbReference>
<dbReference type="SMR" id="B1VN49"/>
<dbReference type="KEGG" id="sgr:SGR_6845"/>
<dbReference type="eggNOG" id="COG0267">
    <property type="taxonomic scope" value="Bacteria"/>
</dbReference>
<dbReference type="HOGENOM" id="CLU_190949_1_1_11"/>
<dbReference type="Proteomes" id="UP000001685">
    <property type="component" value="Chromosome"/>
</dbReference>
<dbReference type="GO" id="GO:0022625">
    <property type="term" value="C:cytosolic large ribosomal subunit"/>
    <property type="evidence" value="ECO:0007669"/>
    <property type="project" value="TreeGrafter"/>
</dbReference>
<dbReference type="GO" id="GO:0003735">
    <property type="term" value="F:structural constituent of ribosome"/>
    <property type="evidence" value="ECO:0007669"/>
    <property type="project" value="InterPro"/>
</dbReference>
<dbReference type="GO" id="GO:0006412">
    <property type="term" value="P:translation"/>
    <property type="evidence" value="ECO:0007669"/>
    <property type="project" value="UniProtKB-UniRule"/>
</dbReference>
<dbReference type="Gene3D" id="2.20.28.120">
    <property type="entry name" value="Ribosomal protein L33"/>
    <property type="match status" value="1"/>
</dbReference>
<dbReference type="HAMAP" id="MF_00294">
    <property type="entry name" value="Ribosomal_bL33"/>
    <property type="match status" value="1"/>
</dbReference>
<dbReference type="InterPro" id="IPR001705">
    <property type="entry name" value="Ribosomal_bL33"/>
</dbReference>
<dbReference type="InterPro" id="IPR018264">
    <property type="entry name" value="Ribosomal_bL33_CS"/>
</dbReference>
<dbReference type="InterPro" id="IPR038584">
    <property type="entry name" value="Ribosomal_bL33_sf"/>
</dbReference>
<dbReference type="InterPro" id="IPR011332">
    <property type="entry name" value="Ribosomal_zn-bd"/>
</dbReference>
<dbReference type="NCBIfam" id="NF001860">
    <property type="entry name" value="PRK00595.1"/>
    <property type="match status" value="1"/>
</dbReference>
<dbReference type="NCBIfam" id="TIGR01023">
    <property type="entry name" value="rpmG_bact"/>
    <property type="match status" value="1"/>
</dbReference>
<dbReference type="PANTHER" id="PTHR15238">
    <property type="entry name" value="54S RIBOSOMAL PROTEIN L39, MITOCHONDRIAL"/>
    <property type="match status" value="1"/>
</dbReference>
<dbReference type="PANTHER" id="PTHR15238:SF1">
    <property type="entry name" value="LARGE RIBOSOMAL SUBUNIT PROTEIN BL33M"/>
    <property type="match status" value="1"/>
</dbReference>
<dbReference type="Pfam" id="PF00471">
    <property type="entry name" value="Ribosomal_L33"/>
    <property type="match status" value="1"/>
</dbReference>
<dbReference type="SUPFAM" id="SSF57829">
    <property type="entry name" value="Zn-binding ribosomal proteins"/>
    <property type="match status" value="1"/>
</dbReference>
<dbReference type="PROSITE" id="PS00582">
    <property type="entry name" value="RIBOSOMAL_L33"/>
    <property type="match status" value="1"/>
</dbReference>
<gene>
    <name evidence="1" type="primary">rpmG3</name>
    <name type="ordered locus">SGR_6845</name>
</gene>
<proteinExistence type="inferred from homology"/>
<evidence type="ECO:0000255" key="1">
    <source>
        <dbReference type="HAMAP-Rule" id="MF_00294"/>
    </source>
</evidence>
<reference key="1">
    <citation type="journal article" date="2008" name="J. Bacteriol.">
        <title>Genome sequence of the streptomycin-producing microorganism Streptomyces griseus IFO 13350.</title>
        <authorList>
            <person name="Ohnishi Y."/>
            <person name="Ishikawa J."/>
            <person name="Hara H."/>
            <person name="Suzuki H."/>
            <person name="Ikenoya M."/>
            <person name="Ikeda H."/>
            <person name="Yamashita A."/>
            <person name="Hattori M."/>
            <person name="Horinouchi S."/>
        </authorList>
    </citation>
    <scope>NUCLEOTIDE SEQUENCE [LARGE SCALE GENOMIC DNA]</scope>
    <source>
        <strain>JCM 4626 / CBS 651.72 / NBRC 13350 / KCC S-0626 / ISP 5235</strain>
    </source>
</reference>
<name>RL333_STRGG</name>
<comment type="similarity">
    <text evidence="1">Belongs to the bacterial ribosomal protein bL33 family.</text>
</comment>
<accession>B1VN49</accession>